<protein>
    <recommendedName>
        <fullName>Lysis protein for colicin E5</fullName>
    </recommendedName>
</protein>
<reference key="1">
    <citation type="journal article" date="1989" name="Mol. Gen. Genet.">
        <title>Nucleotide sequences from the colicin E5, E6 and E9 operons: presence of a degenerate transposon-like structure in the ColE9-J plasmid.</title>
        <authorList>
            <person name="Lau P.C.K."/>
            <person name="Condie J.A."/>
        </authorList>
    </citation>
    <scope>NUCLEOTIDE SEQUENCE [GENOMIC DNA]</scope>
</reference>
<reference key="2">
    <citation type="journal article" date="1989" name="J. Gen. Microbiol.">
        <title>An evolutionary relationship between the ColE5-099 and the ColE9-J plasmids revealed by nucleotide sequencing.</title>
        <authorList>
            <person name="Curtis M.D."/>
            <person name="James R."/>
            <person name="Coddington A."/>
        </authorList>
    </citation>
    <scope>NUCLEOTIDE SEQUENCE [GENOMIC DNA]</scope>
</reference>
<proteinExistence type="inferred from homology"/>
<name>LYS5_ECOLX</name>
<organism>
    <name type="scientific">Escherichia coli</name>
    <dbReference type="NCBI Taxonomy" id="562"/>
    <lineage>
        <taxon>Bacteria</taxon>
        <taxon>Pseudomonadati</taxon>
        <taxon>Pseudomonadota</taxon>
        <taxon>Gammaproteobacteria</taxon>
        <taxon>Enterobacterales</taxon>
        <taxon>Enterobacteriaceae</taxon>
        <taxon>Escherichia</taxon>
    </lineage>
</organism>
<keyword id="KW-0998">Cell outer membrane</keyword>
<keyword id="KW-0449">Lipoprotein</keyword>
<keyword id="KW-0472">Membrane</keyword>
<keyword id="KW-0564">Palmitate</keyword>
<keyword id="KW-0614">Plasmid</keyword>
<keyword id="KW-0732">Signal</keyword>
<dbReference type="EMBL" id="X15857">
    <property type="protein sequence ID" value="CAA33861.1"/>
    <property type="molecule type" value="Genomic_DNA"/>
</dbReference>
<dbReference type="EMBL" id="M30445">
    <property type="protein sequence ID" value="AAA98053.1"/>
    <property type="molecule type" value="Genomic_DNA"/>
</dbReference>
<dbReference type="PIR" id="JQ0330">
    <property type="entry name" value="JQ0330"/>
</dbReference>
<dbReference type="RefSeq" id="WP_000724568.1">
    <property type="nucleotide sequence ID" value="NZ_VEOF01000048.1"/>
</dbReference>
<dbReference type="GO" id="GO:0009279">
    <property type="term" value="C:cell outer membrane"/>
    <property type="evidence" value="ECO:0007669"/>
    <property type="project" value="UniProtKB-SubCell"/>
</dbReference>
<dbReference type="GO" id="GO:0019835">
    <property type="term" value="P:cytolysis"/>
    <property type="evidence" value="ECO:0007669"/>
    <property type="project" value="InterPro"/>
</dbReference>
<dbReference type="InterPro" id="IPR003059">
    <property type="entry name" value="Lysis_col"/>
</dbReference>
<dbReference type="Pfam" id="PF02402">
    <property type="entry name" value="Lysis_col"/>
    <property type="match status" value="1"/>
</dbReference>
<dbReference type="PRINTS" id="PR01297">
    <property type="entry name" value="LYSISCOLICIN"/>
</dbReference>
<dbReference type="PROSITE" id="PS51257">
    <property type="entry name" value="PROKAR_LIPOPROTEIN"/>
    <property type="match status" value="1"/>
</dbReference>
<accession>P13344</accession>
<feature type="signal peptide" evidence="1">
    <location>
        <begin position="1"/>
        <end position="19"/>
    </location>
</feature>
<feature type="chain" id="PRO_0000005685" description="Lysis protein for colicin E5">
    <location>
        <begin position="20"/>
        <end position="47"/>
    </location>
</feature>
<feature type="lipid moiety-binding region" description="N-palmitoyl cysteine" evidence="1">
    <location>
        <position position="20"/>
    </location>
</feature>
<feature type="lipid moiety-binding region" description="S-diacylglycerol cysteine" evidence="1">
    <location>
        <position position="20"/>
    </location>
</feature>
<geneLocation type="plasmid">
    <name>ColE5-099</name>
</geneLocation>
<comment type="function">
    <text>Lysis proteins are required for both colicin release and partial cell lysis.</text>
</comment>
<comment type="subcellular location">
    <subcellularLocation>
        <location evidence="2">Cell outer membrane</location>
        <topology evidence="1">Lipid-anchor</topology>
    </subcellularLocation>
</comment>
<sequence length="47" mass="4926">MKKITWIILLLLAAIILAACQANYIHDVQGGTVSPSSSAELTGLATQ</sequence>
<evidence type="ECO:0000255" key="1">
    <source>
        <dbReference type="PROSITE-ProRule" id="PRU00303"/>
    </source>
</evidence>
<evidence type="ECO:0000305" key="2"/>
<gene>
    <name type="primary">lys</name>
</gene>